<feature type="chain" id="PRO_0000259221" description="Large ribosomal subunit protein bL31">
    <location>
        <begin position="1"/>
        <end position="79"/>
    </location>
</feature>
<name>RL31_RICBR</name>
<comment type="function">
    <text evidence="1">Binds the 23S rRNA.</text>
</comment>
<comment type="subunit">
    <text evidence="1">Part of the 50S ribosomal subunit.</text>
</comment>
<comment type="similarity">
    <text evidence="2">Belongs to the bacterial ribosomal protein bL31 family. Type A subfamily.</text>
</comment>
<protein>
    <recommendedName>
        <fullName evidence="2">Large ribosomal subunit protein bL31</fullName>
    </recommendedName>
    <alternativeName>
        <fullName>50S ribosomal protein L31</fullName>
    </alternativeName>
</protein>
<accession>Q1RH05</accession>
<reference key="1">
    <citation type="journal article" date="2006" name="PLoS Genet.">
        <title>Genome sequence of Rickettsia bellii illuminates the role of amoebae in gene exchanges between intracellular pathogens.</title>
        <authorList>
            <person name="Ogata H."/>
            <person name="La Scola B."/>
            <person name="Audic S."/>
            <person name="Renesto P."/>
            <person name="Blanc G."/>
            <person name="Robert C."/>
            <person name="Fournier P.-E."/>
            <person name="Claverie J.-M."/>
            <person name="Raoult D."/>
        </authorList>
    </citation>
    <scope>NUCLEOTIDE SEQUENCE [LARGE SCALE GENOMIC DNA]</scope>
    <source>
        <strain>RML369-C</strain>
    </source>
</reference>
<proteinExistence type="inferred from homology"/>
<dbReference type="EMBL" id="CP000087">
    <property type="protein sequence ID" value="ABE05359.1"/>
    <property type="molecule type" value="Genomic_DNA"/>
</dbReference>
<dbReference type="RefSeq" id="WP_011477929.1">
    <property type="nucleotide sequence ID" value="NC_007940.1"/>
</dbReference>
<dbReference type="KEGG" id="rbe:RBE_1278"/>
<dbReference type="eggNOG" id="COG0254">
    <property type="taxonomic scope" value="Bacteria"/>
</dbReference>
<dbReference type="HOGENOM" id="CLU_114306_3_1_5"/>
<dbReference type="OrthoDB" id="9803251at2"/>
<dbReference type="Proteomes" id="UP000001951">
    <property type="component" value="Chromosome"/>
</dbReference>
<dbReference type="GO" id="GO:1990904">
    <property type="term" value="C:ribonucleoprotein complex"/>
    <property type="evidence" value="ECO:0007669"/>
    <property type="project" value="UniProtKB-KW"/>
</dbReference>
<dbReference type="GO" id="GO:0005840">
    <property type="term" value="C:ribosome"/>
    <property type="evidence" value="ECO:0007669"/>
    <property type="project" value="UniProtKB-KW"/>
</dbReference>
<dbReference type="GO" id="GO:0019843">
    <property type="term" value="F:rRNA binding"/>
    <property type="evidence" value="ECO:0007669"/>
    <property type="project" value="UniProtKB-KW"/>
</dbReference>
<dbReference type="GO" id="GO:0003735">
    <property type="term" value="F:structural constituent of ribosome"/>
    <property type="evidence" value="ECO:0007669"/>
    <property type="project" value="InterPro"/>
</dbReference>
<dbReference type="GO" id="GO:0006412">
    <property type="term" value="P:translation"/>
    <property type="evidence" value="ECO:0007669"/>
    <property type="project" value="InterPro"/>
</dbReference>
<dbReference type="Gene3D" id="4.10.830.30">
    <property type="entry name" value="Ribosomal protein L31"/>
    <property type="match status" value="1"/>
</dbReference>
<dbReference type="InterPro" id="IPR034704">
    <property type="entry name" value="Ribosomal_bL28/bL31-like_sf"/>
</dbReference>
<dbReference type="InterPro" id="IPR002150">
    <property type="entry name" value="Ribosomal_bL31"/>
</dbReference>
<dbReference type="InterPro" id="IPR042105">
    <property type="entry name" value="Ribosomal_bL31_sf"/>
</dbReference>
<dbReference type="NCBIfam" id="TIGR00105">
    <property type="entry name" value="L31"/>
    <property type="match status" value="1"/>
</dbReference>
<dbReference type="Pfam" id="PF01197">
    <property type="entry name" value="Ribosomal_L31"/>
    <property type="match status" value="1"/>
</dbReference>
<dbReference type="SUPFAM" id="SSF143800">
    <property type="entry name" value="L28p-like"/>
    <property type="match status" value="1"/>
</dbReference>
<dbReference type="PROSITE" id="PS01143">
    <property type="entry name" value="RIBOSOMAL_L31"/>
    <property type="match status" value="1"/>
</dbReference>
<keyword id="KW-0687">Ribonucleoprotein</keyword>
<keyword id="KW-0689">Ribosomal protein</keyword>
<keyword id="KW-0694">RNA-binding</keyword>
<keyword id="KW-0699">rRNA-binding</keyword>
<sequence>MKNGIHPDYKKFLIKVGSDVFETMSTHPAGEILMDVDFRKHPAWNKDIGNVVNQSNKSISDFNKRFSGLSFGSQKKEAS</sequence>
<organism>
    <name type="scientific">Rickettsia bellii (strain RML369-C)</name>
    <dbReference type="NCBI Taxonomy" id="336407"/>
    <lineage>
        <taxon>Bacteria</taxon>
        <taxon>Pseudomonadati</taxon>
        <taxon>Pseudomonadota</taxon>
        <taxon>Alphaproteobacteria</taxon>
        <taxon>Rickettsiales</taxon>
        <taxon>Rickettsiaceae</taxon>
        <taxon>Rickettsieae</taxon>
        <taxon>Rickettsia</taxon>
        <taxon>belli group</taxon>
    </lineage>
</organism>
<evidence type="ECO:0000250" key="1"/>
<evidence type="ECO:0000305" key="2"/>
<gene>
    <name type="primary">rpmE</name>
    <name type="ordered locus">RBE_1278</name>
</gene>